<feature type="chain" id="PRO_0000122086" description="Serine--tRNA ligase">
    <location>
        <begin position="1"/>
        <end position="419"/>
    </location>
</feature>
<feature type="binding site" evidence="1">
    <location>
        <begin position="226"/>
        <end position="228"/>
    </location>
    <ligand>
        <name>L-serine</name>
        <dbReference type="ChEBI" id="CHEBI:33384"/>
    </ligand>
</feature>
<feature type="binding site" evidence="1">
    <location>
        <begin position="257"/>
        <end position="259"/>
    </location>
    <ligand>
        <name>ATP</name>
        <dbReference type="ChEBI" id="CHEBI:30616"/>
    </ligand>
</feature>
<feature type="binding site" evidence="1">
    <location>
        <position position="273"/>
    </location>
    <ligand>
        <name>ATP</name>
        <dbReference type="ChEBI" id="CHEBI:30616"/>
    </ligand>
</feature>
<feature type="binding site" evidence="1">
    <location>
        <position position="280"/>
    </location>
    <ligand>
        <name>L-serine</name>
        <dbReference type="ChEBI" id="CHEBI:33384"/>
    </ligand>
</feature>
<feature type="binding site" evidence="1">
    <location>
        <begin position="344"/>
        <end position="347"/>
    </location>
    <ligand>
        <name>ATP</name>
        <dbReference type="ChEBI" id="CHEBI:30616"/>
    </ligand>
</feature>
<feature type="binding site" evidence="1">
    <location>
        <position position="379"/>
    </location>
    <ligand>
        <name>L-serine</name>
        <dbReference type="ChEBI" id="CHEBI:33384"/>
    </ligand>
</feature>
<feature type="modified residue" description="N6-acetyllysine" evidence="2">
    <location>
        <position position="329"/>
    </location>
</feature>
<sequence>MIDLKLLRENPDAVRRSQLSRGEDPALVDALLTADAARRAVISTADSLRAEQKAASKSVGGASPEERPPLLRRAKELAEQVKAAEADEVEAEAAFTAAHLAISNVIVDGVPAGGEDDYAVLDVVGEPSYLENPKDHLELGESLGLIDMQRGAKVSGSRFYFLTGRGALLQLGLLQLALKLAVDNGFVPTIPPVLVRPEVMVGTGFLGAHAEEVYRVEGDGLYLVGTSEVPLAGYHSGEILDLSRGPLRYAGWSSCFRREAGSHGKDTRGIIRVHQFDKVEGFVYCTPADAEHEHERLLGWQRQMLARIEVPYRVIDVAAGDLGSSAARKFDCEAWIPTQGAYRELTSTSNCTTFQARRLATRYRDASGKPQIAATLNGTLATTRWLVAILENHQRPDGSVRVPDALVPFVGVEVLEPVA</sequence>
<protein>
    <recommendedName>
        <fullName evidence="1">Serine--tRNA ligase</fullName>
        <ecNumber evidence="1">6.1.1.11</ecNumber>
    </recommendedName>
    <alternativeName>
        <fullName evidence="1">Seryl-tRNA synthetase</fullName>
        <shortName evidence="1">SerRS</shortName>
    </alternativeName>
    <alternativeName>
        <fullName evidence="1">Seryl-tRNA(Ser/Sec) synthetase</fullName>
    </alternativeName>
</protein>
<accession>P9WFT7</accession>
<accession>L0TDP6</accession>
<accession>P67561</accession>
<accession>P96244</accession>
<gene>
    <name evidence="1" type="primary">serS</name>
    <name type="ordered locus">Rv3834c</name>
    <name type="ORF">MTCY01A6.35</name>
</gene>
<organism>
    <name type="scientific">Mycobacterium tuberculosis (strain ATCC 25618 / H37Rv)</name>
    <dbReference type="NCBI Taxonomy" id="83332"/>
    <lineage>
        <taxon>Bacteria</taxon>
        <taxon>Bacillati</taxon>
        <taxon>Actinomycetota</taxon>
        <taxon>Actinomycetes</taxon>
        <taxon>Mycobacteriales</taxon>
        <taxon>Mycobacteriaceae</taxon>
        <taxon>Mycobacterium</taxon>
        <taxon>Mycobacterium tuberculosis complex</taxon>
    </lineage>
</organism>
<keyword id="KW-0007">Acetylation</keyword>
<keyword id="KW-0030">Aminoacyl-tRNA synthetase</keyword>
<keyword id="KW-0067">ATP-binding</keyword>
<keyword id="KW-0963">Cytoplasm</keyword>
<keyword id="KW-0436">Ligase</keyword>
<keyword id="KW-0547">Nucleotide-binding</keyword>
<keyword id="KW-0648">Protein biosynthesis</keyword>
<keyword id="KW-1185">Reference proteome</keyword>
<name>SYS_MYCTU</name>
<comment type="function">
    <text evidence="1">Catalyzes the attachment of serine to tRNA(Ser). Is also able to aminoacylate tRNA(Sec) with serine, to form the misacylated tRNA L-seryl-tRNA(Sec), which will be further converted into selenocysteinyl-tRNA(Sec).</text>
</comment>
<comment type="catalytic activity">
    <reaction evidence="1">
        <text>tRNA(Ser) + L-serine + ATP = L-seryl-tRNA(Ser) + AMP + diphosphate + H(+)</text>
        <dbReference type="Rhea" id="RHEA:12292"/>
        <dbReference type="Rhea" id="RHEA-COMP:9669"/>
        <dbReference type="Rhea" id="RHEA-COMP:9703"/>
        <dbReference type="ChEBI" id="CHEBI:15378"/>
        <dbReference type="ChEBI" id="CHEBI:30616"/>
        <dbReference type="ChEBI" id="CHEBI:33019"/>
        <dbReference type="ChEBI" id="CHEBI:33384"/>
        <dbReference type="ChEBI" id="CHEBI:78442"/>
        <dbReference type="ChEBI" id="CHEBI:78533"/>
        <dbReference type="ChEBI" id="CHEBI:456215"/>
        <dbReference type="EC" id="6.1.1.11"/>
    </reaction>
</comment>
<comment type="catalytic activity">
    <reaction evidence="1">
        <text>tRNA(Sec) + L-serine + ATP = L-seryl-tRNA(Sec) + AMP + diphosphate + H(+)</text>
        <dbReference type="Rhea" id="RHEA:42580"/>
        <dbReference type="Rhea" id="RHEA-COMP:9742"/>
        <dbReference type="Rhea" id="RHEA-COMP:10128"/>
        <dbReference type="ChEBI" id="CHEBI:15378"/>
        <dbReference type="ChEBI" id="CHEBI:30616"/>
        <dbReference type="ChEBI" id="CHEBI:33019"/>
        <dbReference type="ChEBI" id="CHEBI:33384"/>
        <dbReference type="ChEBI" id="CHEBI:78442"/>
        <dbReference type="ChEBI" id="CHEBI:78533"/>
        <dbReference type="ChEBI" id="CHEBI:456215"/>
        <dbReference type="EC" id="6.1.1.11"/>
    </reaction>
</comment>
<comment type="pathway">
    <text evidence="1">Aminoacyl-tRNA biosynthesis; selenocysteinyl-tRNA(Sec) biosynthesis; L-seryl-tRNA(Sec) from L-serine and tRNA(Sec): step 1/1.</text>
</comment>
<comment type="subunit">
    <text evidence="1">Homodimer. The tRNA molecule binds across the dimer.</text>
</comment>
<comment type="subcellular location">
    <subcellularLocation>
        <location evidence="1">Cytoplasm</location>
    </subcellularLocation>
</comment>
<comment type="domain">
    <text evidence="1">Consists of two distinct domains, a catalytic core and a N-terminal extension that is involved in tRNA binding.</text>
</comment>
<comment type="similarity">
    <text evidence="1">Belongs to the class-II aminoacyl-tRNA synthetase family. Type-1 seryl-tRNA synthetase subfamily.</text>
</comment>
<evidence type="ECO:0000255" key="1">
    <source>
        <dbReference type="HAMAP-Rule" id="MF_00176"/>
    </source>
</evidence>
<evidence type="ECO:0007744" key="2">
    <source>
    </source>
</evidence>
<reference key="1">
    <citation type="journal article" date="1998" name="Nature">
        <title>Deciphering the biology of Mycobacterium tuberculosis from the complete genome sequence.</title>
        <authorList>
            <person name="Cole S.T."/>
            <person name="Brosch R."/>
            <person name="Parkhill J."/>
            <person name="Garnier T."/>
            <person name="Churcher C.M."/>
            <person name="Harris D.E."/>
            <person name="Gordon S.V."/>
            <person name="Eiglmeier K."/>
            <person name="Gas S."/>
            <person name="Barry C.E. III"/>
            <person name="Tekaia F."/>
            <person name="Badcock K."/>
            <person name="Basham D."/>
            <person name="Brown D."/>
            <person name="Chillingworth T."/>
            <person name="Connor R."/>
            <person name="Davies R.M."/>
            <person name="Devlin K."/>
            <person name="Feltwell T."/>
            <person name="Gentles S."/>
            <person name="Hamlin N."/>
            <person name="Holroyd S."/>
            <person name="Hornsby T."/>
            <person name="Jagels K."/>
            <person name="Krogh A."/>
            <person name="McLean J."/>
            <person name="Moule S."/>
            <person name="Murphy L.D."/>
            <person name="Oliver S."/>
            <person name="Osborne J."/>
            <person name="Quail M.A."/>
            <person name="Rajandream M.A."/>
            <person name="Rogers J."/>
            <person name="Rutter S."/>
            <person name="Seeger K."/>
            <person name="Skelton S."/>
            <person name="Squares S."/>
            <person name="Squares R."/>
            <person name="Sulston J.E."/>
            <person name="Taylor K."/>
            <person name="Whitehead S."/>
            <person name="Barrell B.G."/>
        </authorList>
    </citation>
    <scope>NUCLEOTIDE SEQUENCE [LARGE SCALE GENOMIC DNA]</scope>
    <source>
        <strain>ATCC 25618 / H37Rv</strain>
    </source>
</reference>
<reference key="2">
    <citation type="journal article" date="2011" name="Mol. Cell. Proteomics">
        <title>Proteogenomic analysis of Mycobacterium tuberculosis by high resolution mass spectrometry.</title>
        <authorList>
            <person name="Kelkar D.S."/>
            <person name="Kumar D."/>
            <person name="Kumar P."/>
            <person name="Balakrishnan L."/>
            <person name="Muthusamy B."/>
            <person name="Yadav A.K."/>
            <person name="Shrivastava P."/>
            <person name="Marimuthu A."/>
            <person name="Anand S."/>
            <person name="Sundaram H."/>
            <person name="Kingsbury R."/>
            <person name="Harsha H.C."/>
            <person name="Nair B."/>
            <person name="Prasad T.S."/>
            <person name="Chauhan D.S."/>
            <person name="Katoch K."/>
            <person name="Katoch V.M."/>
            <person name="Kumar P."/>
            <person name="Chaerkady R."/>
            <person name="Ramachandran S."/>
            <person name="Dash D."/>
            <person name="Pandey A."/>
        </authorList>
    </citation>
    <scope>ACETYLATION [LARGE SCALE ANALYSIS] AT LYS-329</scope>
    <scope>IDENTIFICATION BY MASS SPECTROMETRY [LARGE SCALE ANALYSIS]</scope>
    <source>
        <strain>ATCC 25618 / H37Rv</strain>
    </source>
</reference>
<dbReference type="EC" id="6.1.1.11" evidence="1"/>
<dbReference type="EMBL" id="AL123456">
    <property type="protein sequence ID" value="CCP46663.1"/>
    <property type="molecule type" value="Genomic_DNA"/>
</dbReference>
<dbReference type="PIR" id="G70652">
    <property type="entry name" value="G70652"/>
</dbReference>
<dbReference type="RefSeq" id="NP_218351.1">
    <property type="nucleotide sequence ID" value="NC_000962.3"/>
</dbReference>
<dbReference type="RefSeq" id="WP_003420889.1">
    <property type="nucleotide sequence ID" value="NZ_NVQJ01000022.1"/>
</dbReference>
<dbReference type="SMR" id="P9WFT7"/>
<dbReference type="FunCoup" id="P9WFT7">
    <property type="interactions" value="500"/>
</dbReference>
<dbReference type="STRING" id="83332.Rv3834c"/>
<dbReference type="iPTMnet" id="P9WFT7"/>
<dbReference type="PaxDb" id="83332-Rv3834c"/>
<dbReference type="DNASU" id="886163"/>
<dbReference type="GeneID" id="45427835"/>
<dbReference type="GeneID" id="886163"/>
<dbReference type="KEGG" id="mtu:Rv3834c"/>
<dbReference type="KEGG" id="mtv:RVBD_3834c"/>
<dbReference type="TubercuList" id="Rv3834c"/>
<dbReference type="eggNOG" id="COG0172">
    <property type="taxonomic scope" value="Bacteria"/>
</dbReference>
<dbReference type="InParanoid" id="P9WFT7"/>
<dbReference type="OrthoDB" id="9804647at2"/>
<dbReference type="PhylomeDB" id="P9WFT7"/>
<dbReference type="UniPathway" id="UPA00906">
    <property type="reaction ID" value="UER00895"/>
</dbReference>
<dbReference type="Proteomes" id="UP000001584">
    <property type="component" value="Chromosome"/>
</dbReference>
<dbReference type="GO" id="GO:0005737">
    <property type="term" value="C:cytoplasm"/>
    <property type="evidence" value="ECO:0007669"/>
    <property type="project" value="UniProtKB-SubCell"/>
</dbReference>
<dbReference type="GO" id="GO:0005886">
    <property type="term" value="C:plasma membrane"/>
    <property type="evidence" value="ECO:0007005"/>
    <property type="project" value="MTBBASE"/>
</dbReference>
<dbReference type="GO" id="GO:0005524">
    <property type="term" value="F:ATP binding"/>
    <property type="evidence" value="ECO:0007669"/>
    <property type="project" value="UniProtKB-UniRule"/>
</dbReference>
<dbReference type="GO" id="GO:0004828">
    <property type="term" value="F:serine-tRNA ligase activity"/>
    <property type="evidence" value="ECO:0000318"/>
    <property type="project" value="GO_Central"/>
</dbReference>
<dbReference type="GO" id="GO:0000049">
    <property type="term" value="F:tRNA binding"/>
    <property type="evidence" value="ECO:0000318"/>
    <property type="project" value="GO_Central"/>
</dbReference>
<dbReference type="GO" id="GO:0016260">
    <property type="term" value="P:selenocysteine biosynthetic process"/>
    <property type="evidence" value="ECO:0007669"/>
    <property type="project" value="UniProtKB-UniRule"/>
</dbReference>
<dbReference type="GO" id="GO:0006434">
    <property type="term" value="P:seryl-tRNA aminoacylation"/>
    <property type="evidence" value="ECO:0000318"/>
    <property type="project" value="GO_Central"/>
</dbReference>
<dbReference type="CDD" id="cd00770">
    <property type="entry name" value="SerRS_core"/>
    <property type="match status" value="1"/>
</dbReference>
<dbReference type="FunFam" id="1.10.287.40:FF:000004">
    <property type="entry name" value="Serine--tRNA ligase"/>
    <property type="match status" value="1"/>
</dbReference>
<dbReference type="FunFam" id="3.30.930.10:FF:000048">
    <property type="entry name" value="Serine--tRNA ligase"/>
    <property type="match status" value="1"/>
</dbReference>
<dbReference type="Gene3D" id="3.30.930.10">
    <property type="entry name" value="Bira Bifunctional Protein, Domain 2"/>
    <property type="match status" value="1"/>
</dbReference>
<dbReference type="Gene3D" id="1.10.287.40">
    <property type="entry name" value="Serine-tRNA synthetase, tRNA binding domain"/>
    <property type="match status" value="1"/>
</dbReference>
<dbReference type="HAMAP" id="MF_00176">
    <property type="entry name" value="Ser_tRNA_synth_type1"/>
    <property type="match status" value="1"/>
</dbReference>
<dbReference type="InterPro" id="IPR002314">
    <property type="entry name" value="aa-tRNA-synt_IIb"/>
</dbReference>
<dbReference type="InterPro" id="IPR006195">
    <property type="entry name" value="aa-tRNA-synth_II"/>
</dbReference>
<dbReference type="InterPro" id="IPR045864">
    <property type="entry name" value="aa-tRNA-synth_II/BPL/LPL"/>
</dbReference>
<dbReference type="InterPro" id="IPR002317">
    <property type="entry name" value="Ser-tRNA-ligase_type_1"/>
</dbReference>
<dbReference type="InterPro" id="IPR015866">
    <property type="entry name" value="Ser-tRNA-synth_1_N"/>
</dbReference>
<dbReference type="InterPro" id="IPR042103">
    <property type="entry name" value="SerRS_1_N_sf"/>
</dbReference>
<dbReference type="InterPro" id="IPR033729">
    <property type="entry name" value="SerRS_core"/>
</dbReference>
<dbReference type="InterPro" id="IPR010978">
    <property type="entry name" value="tRNA-bd_arm"/>
</dbReference>
<dbReference type="NCBIfam" id="TIGR00414">
    <property type="entry name" value="serS"/>
    <property type="match status" value="1"/>
</dbReference>
<dbReference type="PANTHER" id="PTHR11778">
    <property type="entry name" value="SERYL-TRNA SYNTHETASE"/>
    <property type="match status" value="1"/>
</dbReference>
<dbReference type="Pfam" id="PF02403">
    <property type="entry name" value="Seryl_tRNA_N"/>
    <property type="match status" value="1"/>
</dbReference>
<dbReference type="Pfam" id="PF00587">
    <property type="entry name" value="tRNA-synt_2b"/>
    <property type="match status" value="1"/>
</dbReference>
<dbReference type="PIRSF" id="PIRSF001529">
    <property type="entry name" value="Ser-tRNA-synth_IIa"/>
    <property type="match status" value="1"/>
</dbReference>
<dbReference type="PRINTS" id="PR00981">
    <property type="entry name" value="TRNASYNTHSER"/>
</dbReference>
<dbReference type="SUPFAM" id="SSF55681">
    <property type="entry name" value="Class II aaRS and biotin synthetases"/>
    <property type="match status" value="1"/>
</dbReference>
<dbReference type="SUPFAM" id="SSF46589">
    <property type="entry name" value="tRNA-binding arm"/>
    <property type="match status" value="1"/>
</dbReference>
<dbReference type="PROSITE" id="PS50862">
    <property type="entry name" value="AA_TRNA_LIGASE_II"/>
    <property type="match status" value="1"/>
</dbReference>
<proteinExistence type="evidence at protein level"/>